<comment type="function">
    <text evidence="3">Probable amino acid transporter that may play a role in function in microtubule organization since it causes microtubule defects when overexpressed.</text>
</comment>
<comment type="subcellular location">
    <subcellularLocation>
        <location>Golgi apparatus membrane</location>
        <topology>Multi-pass membrane protein</topology>
    </subcellularLocation>
    <subcellularLocation>
        <location>Cell membrane</location>
        <topology>Multi-pass membrane protein</topology>
    </subcellularLocation>
    <text>When the cells were shifted to a nitrogen-free medium, aat1 was transported from the Golgi apparatus to the plasma membrane within 30 minutes.</text>
</comment>
<comment type="similarity">
    <text evidence="4">Belongs to the amino acid-polyamine-organocation (APC) superfamily.</text>
</comment>
<feature type="chain" id="PRO_0000054173" description="Amino acid transporter 1">
    <location>
        <begin position="1"/>
        <end position="579"/>
    </location>
</feature>
<feature type="topological domain" description="Cytoplasmic" evidence="1">
    <location>
        <begin position="1"/>
        <end position="83"/>
    </location>
</feature>
<feature type="transmembrane region" description="Helical" evidence="2">
    <location>
        <begin position="84"/>
        <end position="104"/>
    </location>
</feature>
<feature type="topological domain" description="Extracellular" evidence="1">
    <location>
        <begin position="105"/>
        <end position="108"/>
    </location>
</feature>
<feature type="transmembrane region" description="Helical" evidence="2">
    <location>
        <begin position="109"/>
        <end position="129"/>
    </location>
</feature>
<feature type="topological domain" description="Cytoplasmic" evidence="1">
    <location>
        <begin position="130"/>
        <end position="161"/>
    </location>
</feature>
<feature type="transmembrane region" description="Helical" evidence="2">
    <location>
        <begin position="162"/>
        <end position="184"/>
    </location>
</feature>
<feature type="topological domain" description="Extracellular" evidence="1">
    <location>
        <begin position="185"/>
        <end position="186"/>
    </location>
</feature>
<feature type="transmembrane region" description="Helical" evidence="2">
    <location>
        <begin position="187"/>
        <end position="207"/>
    </location>
</feature>
<feature type="topological domain" description="Cytoplasmic" evidence="1">
    <location>
        <begin position="208"/>
        <end position="215"/>
    </location>
</feature>
<feature type="transmembrane region" description="Helical" evidence="2">
    <location>
        <begin position="216"/>
        <end position="236"/>
    </location>
</feature>
<feature type="topological domain" description="Extracellular" evidence="1">
    <location>
        <begin position="237"/>
        <end position="265"/>
    </location>
</feature>
<feature type="transmembrane region" description="Helical" evidence="2">
    <location>
        <begin position="266"/>
        <end position="286"/>
    </location>
</feature>
<feature type="topological domain" description="Cytoplasmic" evidence="1">
    <location>
        <begin position="287"/>
        <end position="303"/>
    </location>
</feature>
<feature type="transmembrane region" description="Helical" evidence="2">
    <location>
        <begin position="304"/>
        <end position="324"/>
    </location>
</feature>
<feature type="topological domain" description="Extracellular" evidence="1">
    <location>
        <begin position="325"/>
        <end position="347"/>
    </location>
</feature>
<feature type="transmembrane region" description="Helical" evidence="2">
    <location>
        <begin position="348"/>
        <end position="368"/>
    </location>
</feature>
<feature type="topological domain" description="Cytoplasmic" evidence="1">
    <location>
        <begin position="369"/>
        <end position="401"/>
    </location>
</feature>
<feature type="transmembrane region" description="Helical" evidence="2">
    <location>
        <begin position="402"/>
        <end position="422"/>
    </location>
</feature>
<feature type="topological domain" description="Extracellular" evidence="1">
    <location>
        <begin position="423"/>
        <end position="431"/>
    </location>
</feature>
<feature type="transmembrane region" description="Helical" evidence="2">
    <location>
        <begin position="432"/>
        <end position="452"/>
    </location>
</feature>
<feature type="topological domain" description="Cytoplasmic" evidence="1">
    <location>
        <begin position="453"/>
        <end position="471"/>
    </location>
</feature>
<feature type="transmembrane region" description="Helical" evidence="2">
    <location>
        <begin position="472"/>
        <end position="492"/>
    </location>
</feature>
<feature type="topological domain" description="Extracellular" evidence="1">
    <location>
        <begin position="493"/>
        <end position="513"/>
    </location>
</feature>
<feature type="transmembrane region" description="Helical" evidence="2">
    <location>
        <begin position="514"/>
        <end position="534"/>
    </location>
</feature>
<feature type="topological domain" description="Cytoplasmic" evidence="1">
    <location>
        <begin position="535"/>
        <end position="579"/>
    </location>
</feature>
<proteinExistence type="inferred from homology"/>
<keyword id="KW-0029">Amino-acid transport</keyword>
<keyword id="KW-1003">Cell membrane</keyword>
<keyword id="KW-0333">Golgi apparatus</keyword>
<keyword id="KW-0472">Membrane</keyword>
<keyword id="KW-1185">Reference proteome</keyword>
<keyword id="KW-0812">Transmembrane</keyword>
<keyword id="KW-1133">Transmembrane helix</keyword>
<keyword id="KW-0813">Transport</keyword>
<name>AAT1_SCHPO</name>
<evidence type="ECO:0000250" key="1"/>
<evidence type="ECO:0000255" key="2"/>
<evidence type="ECO:0000269" key="3">
    <source>
    </source>
</evidence>
<evidence type="ECO:0000305" key="4"/>
<reference key="1">
    <citation type="journal article" date="2002" name="Nature">
        <title>The genome sequence of Schizosaccharomyces pombe.</title>
        <authorList>
            <person name="Wood V."/>
            <person name="Gwilliam R."/>
            <person name="Rajandream M.A."/>
            <person name="Lyne M.H."/>
            <person name="Lyne R."/>
            <person name="Stewart A."/>
            <person name="Sgouros J.G."/>
            <person name="Peat N."/>
            <person name="Hayles J."/>
            <person name="Baker S.G."/>
            <person name="Basham D."/>
            <person name="Bowman S."/>
            <person name="Brooks K."/>
            <person name="Brown D."/>
            <person name="Brown S."/>
            <person name="Chillingworth T."/>
            <person name="Churcher C.M."/>
            <person name="Collins M."/>
            <person name="Connor R."/>
            <person name="Cronin A."/>
            <person name="Davis P."/>
            <person name="Feltwell T."/>
            <person name="Fraser A."/>
            <person name="Gentles S."/>
            <person name="Goble A."/>
            <person name="Hamlin N."/>
            <person name="Harris D.E."/>
            <person name="Hidalgo J."/>
            <person name="Hodgson G."/>
            <person name="Holroyd S."/>
            <person name="Hornsby T."/>
            <person name="Howarth S."/>
            <person name="Huckle E.J."/>
            <person name="Hunt S."/>
            <person name="Jagels K."/>
            <person name="James K.D."/>
            <person name="Jones L."/>
            <person name="Jones M."/>
            <person name="Leather S."/>
            <person name="McDonald S."/>
            <person name="McLean J."/>
            <person name="Mooney P."/>
            <person name="Moule S."/>
            <person name="Mungall K.L."/>
            <person name="Murphy L.D."/>
            <person name="Niblett D."/>
            <person name="Odell C."/>
            <person name="Oliver K."/>
            <person name="O'Neil S."/>
            <person name="Pearson D."/>
            <person name="Quail M.A."/>
            <person name="Rabbinowitsch E."/>
            <person name="Rutherford K.M."/>
            <person name="Rutter S."/>
            <person name="Saunders D."/>
            <person name="Seeger K."/>
            <person name="Sharp S."/>
            <person name="Skelton J."/>
            <person name="Simmonds M.N."/>
            <person name="Squares R."/>
            <person name="Squares S."/>
            <person name="Stevens K."/>
            <person name="Taylor K."/>
            <person name="Taylor R.G."/>
            <person name="Tivey A."/>
            <person name="Walsh S.V."/>
            <person name="Warren T."/>
            <person name="Whitehead S."/>
            <person name="Woodward J.R."/>
            <person name="Volckaert G."/>
            <person name="Aert R."/>
            <person name="Robben J."/>
            <person name="Grymonprez B."/>
            <person name="Weltjens I."/>
            <person name="Vanstreels E."/>
            <person name="Rieger M."/>
            <person name="Schaefer M."/>
            <person name="Mueller-Auer S."/>
            <person name="Gabel C."/>
            <person name="Fuchs M."/>
            <person name="Duesterhoeft A."/>
            <person name="Fritzc C."/>
            <person name="Holzer E."/>
            <person name="Moestl D."/>
            <person name="Hilbert H."/>
            <person name="Borzym K."/>
            <person name="Langer I."/>
            <person name="Beck A."/>
            <person name="Lehrach H."/>
            <person name="Reinhardt R."/>
            <person name="Pohl T.M."/>
            <person name="Eger P."/>
            <person name="Zimmermann W."/>
            <person name="Wedler H."/>
            <person name="Wambutt R."/>
            <person name="Purnelle B."/>
            <person name="Goffeau A."/>
            <person name="Cadieu E."/>
            <person name="Dreano S."/>
            <person name="Gloux S."/>
            <person name="Lelaure V."/>
            <person name="Mottier S."/>
            <person name="Galibert F."/>
            <person name="Aves S.J."/>
            <person name="Xiang Z."/>
            <person name="Hunt C."/>
            <person name="Moore K."/>
            <person name="Hurst S.M."/>
            <person name="Lucas M."/>
            <person name="Rochet M."/>
            <person name="Gaillardin C."/>
            <person name="Tallada V.A."/>
            <person name="Garzon A."/>
            <person name="Thode G."/>
            <person name="Daga R.R."/>
            <person name="Cruzado L."/>
            <person name="Jimenez J."/>
            <person name="Sanchez M."/>
            <person name="del Rey F."/>
            <person name="Benito J."/>
            <person name="Dominguez A."/>
            <person name="Revuelta J.L."/>
            <person name="Moreno S."/>
            <person name="Armstrong J."/>
            <person name="Forsburg S.L."/>
            <person name="Cerutti L."/>
            <person name="Lowe T."/>
            <person name="McCombie W.R."/>
            <person name="Paulsen I."/>
            <person name="Potashkin J."/>
            <person name="Shpakovski G.V."/>
            <person name="Ussery D."/>
            <person name="Barrell B.G."/>
            <person name="Nurse P."/>
        </authorList>
    </citation>
    <scope>NUCLEOTIDE SEQUENCE [LARGE SCALE GENOMIC DNA]</scope>
    <source>
        <strain>972 / ATCC 24843</strain>
    </source>
</reference>
<reference key="2">
    <citation type="journal article" date="2002" name="Genetics">
        <title>Role of the Tsc1-Tsc2 complex in signaling and transport across the cell membrane in the fission yeast Schizosaccharomyces pombe.</title>
        <authorList>
            <person name="Matsumoto S."/>
            <person name="Bandyopadhyay A."/>
            <person name="Kwiatkowski D.J."/>
            <person name="Maitra U."/>
            <person name="Matsumoto T."/>
        </authorList>
    </citation>
    <scope>SUBCELLULAR LOCATION</scope>
</reference>
<reference key="3">
    <citation type="journal article" date="2005" name="J. Cell Sci.">
        <title>The nuclear rim protein Amo1 is required for proper microtubule cytoskeleton organisation in fission yeast.</title>
        <authorList>
            <person name="Pardo M."/>
            <person name="Nurse P."/>
        </authorList>
    </citation>
    <scope>FUNCTION</scope>
</reference>
<reference key="4">
    <citation type="journal article" date="2006" name="Nat. Biotechnol.">
        <title>ORFeome cloning and global analysis of protein localization in the fission yeast Schizosaccharomyces pombe.</title>
        <authorList>
            <person name="Matsuyama A."/>
            <person name="Arai R."/>
            <person name="Yashiroda Y."/>
            <person name="Shirai A."/>
            <person name="Kamata A."/>
            <person name="Sekido S."/>
            <person name="Kobayashi Y."/>
            <person name="Hashimoto A."/>
            <person name="Hamamoto M."/>
            <person name="Hiraoka Y."/>
            <person name="Horinouchi S."/>
            <person name="Yoshida M."/>
        </authorList>
    </citation>
    <scope>SUBCELLULAR LOCATION [LARGE SCALE ANALYSIS]</scope>
</reference>
<reference key="5">
    <citation type="journal article" date="2010" name="J. Cell Sci.">
        <title>Mannosylinositol phosphorylceramide is a major sphingolipid component and is required for proper localization of plasma-membrane proteins in Schizosaccharomyces pombe.</title>
        <authorList>
            <person name="Nakase M."/>
            <person name="Tani M."/>
            <person name="Morita T."/>
            <person name="Kitamoto H.K."/>
            <person name="Kashiwazaki J."/>
            <person name="Nakamura T."/>
            <person name="Hosomi A."/>
            <person name="Tanaka N."/>
            <person name="Takegawa K."/>
        </authorList>
    </citation>
    <scope>SUBCELLULAR LOCATION</scope>
</reference>
<sequence>MSAKDYDFDIESVLPEEKAPQVSEAKKDYISQESTVLSGQVDFVEPEHKGFFQNLIDGFKPAREADGNGGPALKRGLSTRHMQLMSIGGAIGSGLYVGSGSALADGGPASVIINYILIGIMMFFVIYALGEMAVAYPVAGSFNTYATRFIDPAWGFAVSWNYFFNYFVTFPFELTTCAITFTFWTDVNCAVWISIFLVVVIGINLFGVRVFGEVEFVLALIKVVATVGFIILAIIINCGGVPTDHRGYIGGSIIKQKPFRHGFKGFCSVYTTAAFSFSGTEIVGLAAAEVGDPRKTLPGAVKQVFWRVAIFYIVSLILIGLLISPDDPKLMGNGSASVSPFVLAIQEANIKGLPSVFNAVIIISVISVTNSSTYTAGRTLHGMANLKQAPAFFKYTDRLGRPLIAMIVVLSFGFFAYINEANNNGNDISDTVFDWLLAISGLSNFFTWGSICLSHIMFRLAFKKQGHSLKELGFVSPMGIWGSVIGLGFNILCLMAEFYVSLFPIGGSPNANDFFQGYLAACITLVFFIGYKIYDRSHIPSLDKLDITTGLKTYEYEETKDSSDTGRFRFFKKIINTVC</sequence>
<dbReference type="EMBL" id="CU329671">
    <property type="protein sequence ID" value="CAB91572.1"/>
    <property type="molecule type" value="Genomic_DNA"/>
</dbReference>
<dbReference type="RefSeq" id="NP_595053.1">
    <property type="nucleotide sequence ID" value="NM_001020959.2"/>
</dbReference>
<dbReference type="SMR" id="Q9P5N2"/>
<dbReference type="BioGRID" id="277557">
    <property type="interactions" value="9"/>
</dbReference>
<dbReference type="FunCoup" id="Q9P5N2">
    <property type="interactions" value="305"/>
</dbReference>
<dbReference type="STRING" id="284812.Q9P5N2"/>
<dbReference type="iPTMnet" id="Q9P5N2"/>
<dbReference type="PaxDb" id="4896-SPBC359.03c.1"/>
<dbReference type="EnsemblFungi" id="SPBC359.03c.1">
    <property type="protein sequence ID" value="SPBC359.03c.1:pep"/>
    <property type="gene ID" value="SPBC359.03c"/>
</dbReference>
<dbReference type="GeneID" id="2541042"/>
<dbReference type="KEGG" id="spo:2541042"/>
<dbReference type="PomBase" id="SPBC359.03c">
    <property type="gene designation" value="aat1"/>
</dbReference>
<dbReference type="VEuPathDB" id="FungiDB:SPBC359.03c"/>
<dbReference type="eggNOG" id="KOG1286">
    <property type="taxonomic scope" value="Eukaryota"/>
</dbReference>
<dbReference type="HOGENOM" id="CLU_007946_12_0_1"/>
<dbReference type="InParanoid" id="Q9P5N2"/>
<dbReference type="PhylomeDB" id="Q9P5N2"/>
<dbReference type="PRO" id="PR:Q9P5N2"/>
<dbReference type="Proteomes" id="UP000002485">
    <property type="component" value="Chromosome II"/>
</dbReference>
<dbReference type="GO" id="GO:0051286">
    <property type="term" value="C:cell tip"/>
    <property type="evidence" value="ECO:0007005"/>
    <property type="project" value="PomBase"/>
</dbReference>
<dbReference type="GO" id="GO:0000324">
    <property type="term" value="C:fungal-type vacuole"/>
    <property type="evidence" value="ECO:0000314"/>
    <property type="project" value="PomBase"/>
</dbReference>
<dbReference type="GO" id="GO:0005794">
    <property type="term" value="C:Golgi apparatus"/>
    <property type="evidence" value="ECO:0000314"/>
    <property type="project" value="PomBase"/>
</dbReference>
<dbReference type="GO" id="GO:0000139">
    <property type="term" value="C:Golgi membrane"/>
    <property type="evidence" value="ECO:0007669"/>
    <property type="project" value="UniProtKB-SubCell"/>
</dbReference>
<dbReference type="GO" id="GO:0016020">
    <property type="term" value="C:membrane"/>
    <property type="evidence" value="ECO:0000318"/>
    <property type="project" value="GO_Central"/>
</dbReference>
<dbReference type="GO" id="GO:0005886">
    <property type="term" value="C:plasma membrane"/>
    <property type="evidence" value="ECO:0000314"/>
    <property type="project" value="PomBase"/>
</dbReference>
<dbReference type="GO" id="GO:0031520">
    <property type="term" value="C:plasma membrane of cell tip"/>
    <property type="evidence" value="ECO:0000314"/>
    <property type="project" value="PomBase"/>
</dbReference>
<dbReference type="GO" id="GO:0015171">
    <property type="term" value="F:amino acid transmembrane transporter activity"/>
    <property type="evidence" value="ECO:0000318"/>
    <property type="project" value="GO_Central"/>
</dbReference>
<dbReference type="GO" id="GO:0003333">
    <property type="term" value="P:amino acid transmembrane transport"/>
    <property type="evidence" value="ECO:0000318"/>
    <property type="project" value="GO_Central"/>
</dbReference>
<dbReference type="FunFam" id="1.20.1740.10:FF:000017">
    <property type="entry name" value="Amino acid permease"/>
    <property type="match status" value="1"/>
</dbReference>
<dbReference type="Gene3D" id="1.20.1740.10">
    <property type="entry name" value="Amino acid/polyamine transporter I"/>
    <property type="match status" value="1"/>
</dbReference>
<dbReference type="InterPro" id="IPR004841">
    <property type="entry name" value="AA-permease/SLC12A_dom"/>
</dbReference>
<dbReference type="InterPro" id="IPR004840">
    <property type="entry name" value="Amino_acid_permease_CS"/>
</dbReference>
<dbReference type="InterPro" id="IPR050524">
    <property type="entry name" value="APC_YAT"/>
</dbReference>
<dbReference type="PANTHER" id="PTHR43341">
    <property type="entry name" value="AMINO ACID PERMEASE"/>
    <property type="match status" value="1"/>
</dbReference>
<dbReference type="PANTHER" id="PTHR43341:SF1">
    <property type="entry name" value="GENERAL AMINO-ACID PERMEASE GAP1"/>
    <property type="match status" value="1"/>
</dbReference>
<dbReference type="Pfam" id="PF00324">
    <property type="entry name" value="AA_permease"/>
    <property type="match status" value="1"/>
</dbReference>
<dbReference type="PIRSF" id="PIRSF006060">
    <property type="entry name" value="AA_transporter"/>
    <property type="match status" value="1"/>
</dbReference>
<dbReference type="PROSITE" id="PS00218">
    <property type="entry name" value="AMINO_ACID_PERMEASE_1"/>
    <property type="match status" value="1"/>
</dbReference>
<protein>
    <recommendedName>
        <fullName>Amino acid transporter 1</fullName>
    </recommendedName>
</protein>
<gene>
    <name type="primary">aat1</name>
    <name type="ORF">SPBC359.03c</name>
</gene>
<accession>Q9P5N2</accession>
<organism>
    <name type="scientific">Schizosaccharomyces pombe (strain 972 / ATCC 24843)</name>
    <name type="common">Fission yeast</name>
    <dbReference type="NCBI Taxonomy" id="284812"/>
    <lineage>
        <taxon>Eukaryota</taxon>
        <taxon>Fungi</taxon>
        <taxon>Dikarya</taxon>
        <taxon>Ascomycota</taxon>
        <taxon>Taphrinomycotina</taxon>
        <taxon>Schizosaccharomycetes</taxon>
        <taxon>Schizosaccharomycetales</taxon>
        <taxon>Schizosaccharomycetaceae</taxon>
        <taxon>Schizosaccharomyces</taxon>
    </lineage>
</organism>